<accession>B5RRM3</accession>
<proteinExistence type="inferred from homology"/>
<sequence length="215" mass="24790">MKLVFLGPPGSGKGTIAKILSNELNYYHISTGDLFRTNIENDTPLGKEIKQIVENGQLVPDSITIKVVEDKINTIDNRDNFILDGFPRNINQAIELDRLLENIKIINFLINEKLLVKRLSGRRICQSCCKIFNIYTLPTKEKEICDFCQGILYQRKDDTKESLKIRLQEYNLQTKPLINFYSNSNRLNNIDASKNINEVQKNLMEIISKIEKKLV</sequence>
<reference key="1">
    <citation type="journal article" date="2008" name="PLoS Genet.">
        <title>The genome of Borrelia recurrentis, the agent of deadly louse-borne relapsing fever, is a degraded subset of tick-borne Borrelia duttonii.</title>
        <authorList>
            <person name="Lescot M."/>
            <person name="Audic S."/>
            <person name="Robert C."/>
            <person name="Nguyen T.T."/>
            <person name="Blanc G."/>
            <person name="Cutler S.J."/>
            <person name="Wincker P."/>
            <person name="Couloux A."/>
            <person name="Claverie J.-M."/>
            <person name="Raoult D."/>
            <person name="Drancourt M."/>
        </authorList>
    </citation>
    <scope>NUCLEOTIDE SEQUENCE [LARGE SCALE GENOMIC DNA]</scope>
    <source>
        <strain>A1</strain>
    </source>
</reference>
<gene>
    <name evidence="1" type="primary">adk</name>
    <name type="ordered locus">BRE_415</name>
</gene>
<organism>
    <name type="scientific">Borrelia recurrentis (strain A1)</name>
    <dbReference type="NCBI Taxonomy" id="412418"/>
    <lineage>
        <taxon>Bacteria</taxon>
        <taxon>Pseudomonadati</taxon>
        <taxon>Spirochaetota</taxon>
        <taxon>Spirochaetia</taxon>
        <taxon>Spirochaetales</taxon>
        <taxon>Borreliaceae</taxon>
        <taxon>Borrelia</taxon>
    </lineage>
</organism>
<comment type="function">
    <text evidence="1">Catalyzes the reversible transfer of the terminal phosphate group between ATP and AMP. Plays an important role in cellular energy homeostasis and in adenine nucleotide metabolism.</text>
</comment>
<comment type="catalytic activity">
    <reaction evidence="1">
        <text>AMP + ATP = 2 ADP</text>
        <dbReference type="Rhea" id="RHEA:12973"/>
        <dbReference type="ChEBI" id="CHEBI:30616"/>
        <dbReference type="ChEBI" id="CHEBI:456215"/>
        <dbReference type="ChEBI" id="CHEBI:456216"/>
        <dbReference type="EC" id="2.7.4.3"/>
    </reaction>
</comment>
<comment type="pathway">
    <text evidence="1">Purine metabolism; AMP biosynthesis via salvage pathway; AMP from ADP: step 1/1.</text>
</comment>
<comment type="subunit">
    <text evidence="1">Monomer.</text>
</comment>
<comment type="subcellular location">
    <subcellularLocation>
        <location evidence="1">Cytoplasm</location>
    </subcellularLocation>
</comment>
<comment type="domain">
    <text evidence="1">Consists of three domains, a large central CORE domain and two small peripheral domains, NMPbind and LID, which undergo movements during catalysis. The LID domain closes over the site of phosphoryl transfer upon ATP binding. Assembling and dissambling the active center during each catalytic cycle provides an effective means to prevent ATP hydrolysis. Some bacteria have evolved a zinc-coordinating structure that stabilizes the LID domain.</text>
</comment>
<comment type="similarity">
    <text evidence="1">Belongs to the adenylate kinase family.</text>
</comment>
<dbReference type="EC" id="2.7.4.3" evidence="1"/>
<dbReference type="EMBL" id="CP000993">
    <property type="protein sequence ID" value="ACH94657.1"/>
    <property type="molecule type" value="Genomic_DNA"/>
</dbReference>
<dbReference type="RefSeq" id="WP_012538888.1">
    <property type="nucleotide sequence ID" value="NC_011244.1"/>
</dbReference>
<dbReference type="SMR" id="B5RRM3"/>
<dbReference type="KEGG" id="bre:BRE_415"/>
<dbReference type="HOGENOM" id="CLU_032354_1_2_12"/>
<dbReference type="UniPathway" id="UPA00588">
    <property type="reaction ID" value="UER00649"/>
</dbReference>
<dbReference type="Proteomes" id="UP000000612">
    <property type="component" value="Chromosome"/>
</dbReference>
<dbReference type="GO" id="GO:0005737">
    <property type="term" value="C:cytoplasm"/>
    <property type="evidence" value="ECO:0007669"/>
    <property type="project" value="UniProtKB-SubCell"/>
</dbReference>
<dbReference type="GO" id="GO:0004017">
    <property type="term" value="F:adenylate kinase activity"/>
    <property type="evidence" value="ECO:0007669"/>
    <property type="project" value="UniProtKB-UniRule"/>
</dbReference>
<dbReference type="GO" id="GO:0005524">
    <property type="term" value="F:ATP binding"/>
    <property type="evidence" value="ECO:0007669"/>
    <property type="project" value="UniProtKB-UniRule"/>
</dbReference>
<dbReference type="GO" id="GO:0008270">
    <property type="term" value="F:zinc ion binding"/>
    <property type="evidence" value="ECO:0007669"/>
    <property type="project" value="UniProtKB-UniRule"/>
</dbReference>
<dbReference type="GO" id="GO:0044209">
    <property type="term" value="P:AMP salvage"/>
    <property type="evidence" value="ECO:0007669"/>
    <property type="project" value="UniProtKB-UniRule"/>
</dbReference>
<dbReference type="CDD" id="cd01428">
    <property type="entry name" value="ADK"/>
    <property type="match status" value="1"/>
</dbReference>
<dbReference type="FunFam" id="3.40.50.300:FF:000106">
    <property type="entry name" value="Adenylate kinase mitochondrial"/>
    <property type="match status" value="1"/>
</dbReference>
<dbReference type="Gene3D" id="3.40.50.300">
    <property type="entry name" value="P-loop containing nucleotide triphosphate hydrolases"/>
    <property type="match status" value="1"/>
</dbReference>
<dbReference type="HAMAP" id="MF_00235">
    <property type="entry name" value="Adenylate_kinase_Adk"/>
    <property type="match status" value="1"/>
</dbReference>
<dbReference type="InterPro" id="IPR006259">
    <property type="entry name" value="Adenyl_kin_sub"/>
</dbReference>
<dbReference type="InterPro" id="IPR000850">
    <property type="entry name" value="Adenylat/UMP-CMP_kin"/>
</dbReference>
<dbReference type="InterPro" id="IPR033690">
    <property type="entry name" value="Adenylat_kinase_CS"/>
</dbReference>
<dbReference type="InterPro" id="IPR007862">
    <property type="entry name" value="Adenylate_kinase_lid-dom"/>
</dbReference>
<dbReference type="InterPro" id="IPR027417">
    <property type="entry name" value="P-loop_NTPase"/>
</dbReference>
<dbReference type="NCBIfam" id="TIGR01351">
    <property type="entry name" value="adk"/>
    <property type="match status" value="1"/>
</dbReference>
<dbReference type="NCBIfam" id="NF001381">
    <property type="entry name" value="PRK00279.1-3"/>
    <property type="match status" value="1"/>
</dbReference>
<dbReference type="NCBIfam" id="NF011099">
    <property type="entry name" value="PRK14526.1"/>
    <property type="match status" value="1"/>
</dbReference>
<dbReference type="PANTHER" id="PTHR23359">
    <property type="entry name" value="NUCLEOTIDE KINASE"/>
    <property type="match status" value="1"/>
</dbReference>
<dbReference type="Pfam" id="PF00406">
    <property type="entry name" value="ADK"/>
    <property type="match status" value="1"/>
</dbReference>
<dbReference type="Pfam" id="PF05191">
    <property type="entry name" value="ADK_lid"/>
    <property type="match status" value="1"/>
</dbReference>
<dbReference type="PRINTS" id="PR00094">
    <property type="entry name" value="ADENYLTKNASE"/>
</dbReference>
<dbReference type="SUPFAM" id="SSF52540">
    <property type="entry name" value="P-loop containing nucleoside triphosphate hydrolases"/>
    <property type="match status" value="1"/>
</dbReference>
<dbReference type="PROSITE" id="PS00113">
    <property type="entry name" value="ADENYLATE_KINASE"/>
    <property type="match status" value="1"/>
</dbReference>
<name>KAD_BORRA</name>
<keyword id="KW-0067">ATP-binding</keyword>
<keyword id="KW-0963">Cytoplasm</keyword>
<keyword id="KW-0418">Kinase</keyword>
<keyword id="KW-0479">Metal-binding</keyword>
<keyword id="KW-0545">Nucleotide biosynthesis</keyword>
<keyword id="KW-0547">Nucleotide-binding</keyword>
<keyword id="KW-0808">Transferase</keyword>
<keyword id="KW-0862">Zinc</keyword>
<feature type="chain" id="PRO_1000100533" description="Adenylate kinase">
    <location>
        <begin position="1"/>
        <end position="215"/>
    </location>
</feature>
<feature type="region of interest" description="NMP" evidence="1">
    <location>
        <begin position="30"/>
        <end position="59"/>
    </location>
</feature>
<feature type="region of interest" description="LID" evidence="1">
    <location>
        <begin position="121"/>
        <end position="158"/>
    </location>
</feature>
<feature type="binding site" evidence="1">
    <location>
        <begin position="10"/>
        <end position="15"/>
    </location>
    <ligand>
        <name>ATP</name>
        <dbReference type="ChEBI" id="CHEBI:30616"/>
    </ligand>
</feature>
<feature type="binding site" evidence="1">
    <location>
        <position position="31"/>
    </location>
    <ligand>
        <name>AMP</name>
        <dbReference type="ChEBI" id="CHEBI:456215"/>
    </ligand>
</feature>
<feature type="binding site" evidence="1">
    <location>
        <position position="36"/>
    </location>
    <ligand>
        <name>AMP</name>
        <dbReference type="ChEBI" id="CHEBI:456215"/>
    </ligand>
</feature>
<feature type="binding site" evidence="1">
    <location>
        <begin position="57"/>
        <end position="59"/>
    </location>
    <ligand>
        <name>AMP</name>
        <dbReference type="ChEBI" id="CHEBI:456215"/>
    </ligand>
</feature>
<feature type="binding site" evidence="1">
    <location>
        <begin position="85"/>
        <end position="88"/>
    </location>
    <ligand>
        <name>AMP</name>
        <dbReference type="ChEBI" id="CHEBI:456215"/>
    </ligand>
</feature>
<feature type="binding site" evidence="1">
    <location>
        <position position="92"/>
    </location>
    <ligand>
        <name>AMP</name>
        <dbReference type="ChEBI" id="CHEBI:456215"/>
    </ligand>
</feature>
<feature type="binding site" evidence="1">
    <location>
        <position position="122"/>
    </location>
    <ligand>
        <name>ATP</name>
        <dbReference type="ChEBI" id="CHEBI:30616"/>
    </ligand>
</feature>
<feature type="binding site" evidence="1">
    <location>
        <position position="125"/>
    </location>
    <ligand>
        <name>Zn(2+)</name>
        <dbReference type="ChEBI" id="CHEBI:29105"/>
        <note>structural</note>
    </ligand>
</feature>
<feature type="binding site" evidence="1">
    <location>
        <position position="128"/>
    </location>
    <ligand>
        <name>Zn(2+)</name>
        <dbReference type="ChEBI" id="CHEBI:29105"/>
        <note>structural</note>
    </ligand>
</feature>
<feature type="binding site" evidence="1">
    <location>
        <begin position="131"/>
        <end position="132"/>
    </location>
    <ligand>
        <name>ATP</name>
        <dbReference type="ChEBI" id="CHEBI:30616"/>
    </ligand>
</feature>
<feature type="binding site" evidence="1">
    <location>
        <position position="145"/>
    </location>
    <ligand>
        <name>Zn(2+)</name>
        <dbReference type="ChEBI" id="CHEBI:29105"/>
        <note>structural</note>
    </ligand>
</feature>
<feature type="binding site" evidence="1">
    <location>
        <position position="148"/>
    </location>
    <ligand>
        <name>Zn(2+)</name>
        <dbReference type="ChEBI" id="CHEBI:29105"/>
        <note>structural</note>
    </ligand>
</feature>
<feature type="binding site" evidence="1">
    <location>
        <position position="155"/>
    </location>
    <ligand>
        <name>AMP</name>
        <dbReference type="ChEBI" id="CHEBI:456215"/>
    </ligand>
</feature>
<feature type="binding site" evidence="1">
    <location>
        <position position="166"/>
    </location>
    <ligand>
        <name>AMP</name>
        <dbReference type="ChEBI" id="CHEBI:456215"/>
    </ligand>
</feature>
<feature type="binding site" evidence="1">
    <location>
        <position position="194"/>
    </location>
    <ligand>
        <name>ATP</name>
        <dbReference type="ChEBI" id="CHEBI:30616"/>
    </ligand>
</feature>
<evidence type="ECO:0000255" key="1">
    <source>
        <dbReference type="HAMAP-Rule" id="MF_00235"/>
    </source>
</evidence>
<protein>
    <recommendedName>
        <fullName evidence="1">Adenylate kinase</fullName>
        <shortName evidence="1">AK</shortName>
        <ecNumber evidence="1">2.7.4.3</ecNumber>
    </recommendedName>
    <alternativeName>
        <fullName evidence="1">ATP-AMP transphosphorylase</fullName>
    </alternativeName>
    <alternativeName>
        <fullName evidence="1">ATP:AMP phosphotransferase</fullName>
    </alternativeName>
    <alternativeName>
        <fullName evidence="1">Adenylate monophosphate kinase</fullName>
    </alternativeName>
</protein>